<reference key="1">
    <citation type="journal article" date="2000" name="DNA Res.">
        <title>Structural analysis of Arabidopsis thaliana chromosome 3. I. Sequence features of the regions of 4,504,864 bp covered by sixty P1 and TAC clones.</title>
        <authorList>
            <person name="Sato S."/>
            <person name="Nakamura Y."/>
            <person name="Kaneko T."/>
            <person name="Katoh T."/>
            <person name="Asamizu E."/>
            <person name="Tabata S."/>
        </authorList>
    </citation>
    <scope>NUCLEOTIDE SEQUENCE [LARGE SCALE GENOMIC DNA]</scope>
    <source>
        <strain>cv. Columbia</strain>
    </source>
</reference>
<reference key="2">
    <citation type="journal article" date="2017" name="Plant J.">
        <title>Araport11: a complete reannotation of the Arabidopsis thaliana reference genome.</title>
        <authorList>
            <person name="Cheng C.Y."/>
            <person name="Krishnakumar V."/>
            <person name="Chan A.P."/>
            <person name="Thibaud-Nissen F."/>
            <person name="Schobel S."/>
            <person name="Town C.D."/>
        </authorList>
    </citation>
    <scope>GENOME REANNOTATION</scope>
    <source>
        <strain>cv. Columbia</strain>
    </source>
</reference>
<reference key="3">
    <citation type="journal article" date="2003" name="Science">
        <title>Empirical analysis of transcriptional activity in the Arabidopsis genome.</title>
        <authorList>
            <person name="Yamada K."/>
            <person name="Lim J."/>
            <person name="Dale J.M."/>
            <person name="Chen H."/>
            <person name="Shinn P."/>
            <person name="Palm C.J."/>
            <person name="Southwick A.M."/>
            <person name="Wu H.C."/>
            <person name="Kim C.J."/>
            <person name="Nguyen M."/>
            <person name="Pham P.K."/>
            <person name="Cheuk R.F."/>
            <person name="Karlin-Newmann G."/>
            <person name="Liu S.X."/>
            <person name="Lam B."/>
            <person name="Sakano H."/>
            <person name="Wu T."/>
            <person name="Yu G."/>
            <person name="Miranda M."/>
            <person name="Quach H.L."/>
            <person name="Tripp M."/>
            <person name="Chang C.H."/>
            <person name="Lee J.M."/>
            <person name="Toriumi M.J."/>
            <person name="Chan M.M."/>
            <person name="Tang C.C."/>
            <person name="Onodera C.S."/>
            <person name="Deng J.M."/>
            <person name="Akiyama K."/>
            <person name="Ansari Y."/>
            <person name="Arakawa T."/>
            <person name="Banh J."/>
            <person name="Banno F."/>
            <person name="Bowser L."/>
            <person name="Brooks S.Y."/>
            <person name="Carninci P."/>
            <person name="Chao Q."/>
            <person name="Choy N."/>
            <person name="Enju A."/>
            <person name="Goldsmith A.D."/>
            <person name="Gurjal M."/>
            <person name="Hansen N.F."/>
            <person name="Hayashizaki Y."/>
            <person name="Johnson-Hopson C."/>
            <person name="Hsuan V.W."/>
            <person name="Iida K."/>
            <person name="Karnes M."/>
            <person name="Khan S."/>
            <person name="Koesema E."/>
            <person name="Ishida J."/>
            <person name="Jiang P.X."/>
            <person name="Jones T."/>
            <person name="Kawai J."/>
            <person name="Kamiya A."/>
            <person name="Meyers C."/>
            <person name="Nakajima M."/>
            <person name="Narusaka M."/>
            <person name="Seki M."/>
            <person name="Sakurai T."/>
            <person name="Satou M."/>
            <person name="Tamse R."/>
            <person name="Vaysberg M."/>
            <person name="Wallender E.K."/>
            <person name="Wong C."/>
            <person name="Yamamura Y."/>
            <person name="Yuan S."/>
            <person name="Shinozaki K."/>
            <person name="Davis R.W."/>
            <person name="Theologis A."/>
            <person name="Ecker J.R."/>
        </authorList>
    </citation>
    <scope>NUCLEOTIDE SEQUENCE [LARGE SCALE MRNA]</scope>
    <source>
        <strain>cv. Columbia</strain>
    </source>
</reference>
<comment type="cofactor">
    <cofactor evidence="1">
        <name>heme</name>
        <dbReference type="ChEBI" id="CHEBI:30413"/>
    </cofactor>
</comment>
<comment type="subcellular location">
    <subcellularLocation>
        <location evidence="3">Membrane</location>
        <topology evidence="3">Single-pass membrane protein</topology>
    </subcellularLocation>
</comment>
<comment type="similarity">
    <text evidence="3">Belongs to the cytochrome P450 family.</text>
</comment>
<sequence length="500" mass="57033">MSISLYFLLLLPLFLIFFKKLSPSKGKLPPGPLGLPIIGNLHQLGKSLHRSFHKLSQNYGPVMFLHFGVVPVVVVSTREAAEEVLKTHDLETCTRPKLTATKLFSYNYKDIGFAQYGDDWREMRKLAMLELFSSKKLKAFRYIREEESEVLVNKLSKSAETRTMVDLRKALFSYTASIVCRLAFGQNFHECDFVDMDKVEDLVLESETNLGSFAFTDFFPAGLGWVIDRISGQHSELHKAFARLSNFFQHVIDDHLKPGQSQDHSDIIGVMLDMINKESKVGSFQVTYDHLKGVMSDVFLAGVNAGAITMIWAMTELARHPRVMKKLQQEIREILGDNKEKITEQDLEKVHYLKLVIEETFRLHPPAPLLLPRETMSDLKIQGYNIPKNTMIEINTYSIGRDPNCWENPNDFNPERFIDSPVEYKGQHYELLPFGAGRRICPGMATGITIVELGLLNVLYFFDWSLPDGMKIEDIDMEEAGAFVVAKKVPLELIPTPHQW</sequence>
<protein>
    <recommendedName>
        <fullName>Cytochrome P450 71B22</fullName>
        <ecNumber>1.14.-.-</ecNumber>
    </recommendedName>
</protein>
<feature type="chain" id="PRO_0000052099" description="Cytochrome P450 71B22">
    <location>
        <begin position="1"/>
        <end position="500"/>
    </location>
</feature>
<feature type="transmembrane region" description="Helical" evidence="2">
    <location>
        <begin position="1"/>
        <end position="21"/>
    </location>
</feature>
<feature type="binding site" description="axial binding residue" evidence="1">
    <location>
        <position position="441"/>
    </location>
    <ligand>
        <name>heme</name>
        <dbReference type="ChEBI" id="CHEBI:30413"/>
    </ligand>
    <ligandPart>
        <name>Fe</name>
        <dbReference type="ChEBI" id="CHEBI:18248"/>
    </ligandPart>
</feature>
<organism>
    <name type="scientific">Arabidopsis thaliana</name>
    <name type="common">Mouse-ear cress</name>
    <dbReference type="NCBI Taxonomy" id="3702"/>
    <lineage>
        <taxon>Eukaryota</taxon>
        <taxon>Viridiplantae</taxon>
        <taxon>Streptophyta</taxon>
        <taxon>Embryophyta</taxon>
        <taxon>Tracheophyta</taxon>
        <taxon>Spermatophyta</taxon>
        <taxon>Magnoliopsida</taxon>
        <taxon>eudicotyledons</taxon>
        <taxon>Gunneridae</taxon>
        <taxon>Pentapetalae</taxon>
        <taxon>rosids</taxon>
        <taxon>malvids</taxon>
        <taxon>Brassicales</taxon>
        <taxon>Brassicaceae</taxon>
        <taxon>Camelineae</taxon>
        <taxon>Arabidopsis</taxon>
    </lineage>
</organism>
<proteinExistence type="evidence at transcript level"/>
<gene>
    <name type="primary">CYP71B22</name>
    <name type="ordered locus">At3g26200</name>
    <name type="ORF">MTC11.11</name>
</gene>
<evidence type="ECO:0000250" key="1"/>
<evidence type="ECO:0000255" key="2"/>
<evidence type="ECO:0000305" key="3"/>
<keyword id="KW-0349">Heme</keyword>
<keyword id="KW-0408">Iron</keyword>
<keyword id="KW-0472">Membrane</keyword>
<keyword id="KW-0479">Metal-binding</keyword>
<keyword id="KW-0503">Monooxygenase</keyword>
<keyword id="KW-0560">Oxidoreductase</keyword>
<keyword id="KW-1185">Reference proteome</keyword>
<keyword id="KW-0812">Transmembrane</keyword>
<keyword id="KW-1133">Transmembrane helix</keyword>
<accession>Q9LTM1</accession>
<name>C71BM_ARATH</name>
<dbReference type="EC" id="1.14.-.-"/>
<dbReference type="EMBL" id="AB024038">
    <property type="protein sequence ID" value="BAB02441.1"/>
    <property type="molecule type" value="Genomic_DNA"/>
</dbReference>
<dbReference type="EMBL" id="CP002686">
    <property type="protein sequence ID" value="AEE77133.1"/>
    <property type="molecule type" value="Genomic_DNA"/>
</dbReference>
<dbReference type="EMBL" id="AF360271">
    <property type="protein sequence ID" value="AAK25981.1"/>
    <property type="molecule type" value="mRNA"/>
</dbReference>
<dbReference type="EMBL" id="AY040080">
    <property type="protein sequence ID" value="AAK64138.1"/>
    <property type="molecule type" value="mRNA"/>
</dbReference>
<dbReference type="RefSeq" id="NP_189251.1">
    <property type="nucleotide sequence ID" value="NM_113527.2"/>
</dbReference>
<dbReference type="SMR" id="Q9LTM1"/>
<dbReference type="BioGRID" id="7552">
    <property type="interactions" value="7"/>
</dbReference>
<dbReference type="FunCoup" id="Q9LTM1">
    <property type="interactions" value="344"/>
</dbReference>
<dbReference type="IntAct" id="Q9LTM1">
    <property type="interactions" value="8"/>
</dbReference>
<dbReference type="STRING" id="3702.Q9LTM1"/>
<dbReference type="PaxDb" id="3702-AT3G26200.1"/>
<dbReference type="ProteomicsDB" id="240530"/>
<dbReference type="EnsemblPlants" id="AT3G26200.1">
    <property type="protein sequence ID" value="AT3G26200.1"/>
    <property type="gene ID" value="AT3G26200"/>
</dbReference>
<dbReference type="GeneID" id="822221"/>
<dbReference type="Gramene" id="AT3G26200.1">
    <property type="protein sequence ID" value="AT3G26200.1"/>
    <property type="gene ID" value="AT3G26200"/>
</dbReference>
<dbReference type="KEGG" id="ath:AT3G26200"/>
<dbReference type="Araport" id="AT3G26200"/>
<dbReference type="TAIR" id="AT3G26200">
    <property type="gene designation" value="CYP71B22"/>
</dbReference>
<dbReference type="eggNOG" id="KOG0156">
    <property type="taxonomic scope" value="Eukaryota"/>
</dbReference>
<dbReference type="HOGENOM" id="CLU_001570_4_1_1"/>
<dbReference type="InParanoid" id="Q9LTM1"/>
<dbReference type="OMA" id="PVMFLHF"/>
<dbReference type="OrthoDB" id="1055148at2759"/>
<dbReference type="PhylomeDB" id="Q9LTM1"/>
<dbReference type="BioCyc" id="ARA:AT3G26200-MONOMER"/>
<dbReference type="PRO" id="PR:Q9LTM1"/>
<dbReference type="Proteomes" id="UP000006548">
    <property type="component" value="Chromosome 3"/>
</dbReference>
<dbReference type="ExpressionAtlas" id="Q9LTM1">
    <property type="expression patterns" value="baseline and differential"/>
</dbReference>
<dbReference type="GO" id="GO:0016020">
    <property type="term" value="C:membrane"/>
    <property type="evidence" value="ECO:0007669"/>
    <property type="project" value="UniProtKB-SubCell"/>
</dbReference>
<dbReference type="GO" id="GO:0020037">
    <property type="term" value="F:heme binding"/>
    <property type="evidence" value="ECO:0007669"/>
    <property type="project" value="InterPro"/>
</dbReference>
<dbReference type="GO" id="GO:0005506">
    <property type="term" value="F:iron ion binding"/>
    <property type="evidence" value="ECO:0007669"/>
    <property type="project" value="InterPro"/>
</dbReference>
<dbReference type="GO" id="GO:0004497">
    <property type="term" value="F:monooxygenase activity"/>
    <property type="evidence" value="ECO:0007669"/>
    <property type="project" value="UniProtKB-KW"/>
</dbReference>
<dbReference type="GO" id="GO:0016705">
    <property type="term" value="F:oxidoreductase activity, acting on paired donors, with incorporation or reduction of molecular oxygen"/>
    <property type="evidence" value="ECO:0007669"/>
    <property type="project" value="InterPro"/>
</dbReference>
<dbReference type="CDD" id="cd11072">
    <property type="entry name" value="CYP71-like"/>
    <property type="match status" value="1"/>
</dbReference>
<dbReference type="FunFam" id="1.10.630.10:FF:000011">
    <property type="entry name" value="Cytochrome P450 83B1"/>
    <property type="match status" value="1"/>
</dbReference>
<dbReference type="Gene3D" id="1.10.630.10">
    <property type="entry name" value="Cytochrome P450"/>
    <property type="match status" value="1"/>
</dbReference>
<dbReference type="InterPro" id="IPR001128">
    <property type="entry name" value="Cyt_P450"/>
</dbReference>
<dbReference type="InterPro" id="IPR017972">
    <property type="entry name" value="Cyt_P450_CS"/>
</dbReference>
<dbReference type="InterPro" id="IPR002401">
    <property type="entry name" value="Cyt_P450_E_grp-I"/>
</dbReference>
<dbReference type="InterPro" id="IPR036396">
    <property type="entry name" value="Cyt_P450_sf"/>
</dbReference>
<dbReference type="InterPro" id="IPR050193">
    <property type="entry name" value="Cytochrome_P450_71"/>
</dbReference>
<dbReference type="PANTHER" id="PTHR47956">
    <property type="entry name" value="CYTOCHROME P450 71B11-RELATED"/>
    <property type="match status" value="1"/>
</dbReference>
<dbReference type="PANTHER" id="PTHR47956:SF73">
    <property type="entry name" value="CYTOCHROME P450 71B22"/>
    <property type="match status" value="1"/>
</dbReference>
<dbReference type="Pfam" id="PF00067">
    <property type="entry name" value="p450"/>
    <property type="match status" value="1"/>
</dbReference>
<dbReference type="PRINTS" id="PR00463">
    <property type="entry name" value="EP450I"/>
</dbReference>
<dbReference type="PRINTS" id="PR00385">
    <property type="entry name" value="P450"/>
</dbReference>
<dbReference type="SUPFAM" id="SSF48264">
    <property type="entry name" value="Cytochrome P450"/>
    <property type="match status" value="1"/>
</dbReference>
<dbReference type="PROSITE" id="PS00086">
    <property type="entry name" value="CYTOCHROME_P450"/>
    <property type="match status" value="1"/>
</dbReference>